<accession>Q9F4E6</accession>
<organism>
    <name type="scientific">Buchnera aphidicola subsp. Tuberolachnus salignus</name>
    <dbReference type="NCBI Taxonomy" id="98804"/>
    <lineage>
        <taxon>Bacteria</taxon>
        <taxon>Pseudomonadati</taxon>
        <taxon>Pseudomonadota</taxon>
        <taxon>Gammaproteobacteria</taxon>
        <taxon>Enterobacterales</taxon>
        <taxon>Erwiniaceae</taxon>
        <taxon>Buchnera</taxon>
    </lineage>
</organism>
<sequence>MNIRPLHDRVIVKRKEVESKSAGGIVLTGSAAGKSTRGEIIAVGKGRVLENGNTQPLDVKIGDTVIFNDGYGVKVEKIDNQDMLIMSESDILAIVEA</sequence>
<feature type="chain" id="PRO_0000174721" description="Co-chaperonin GroES">
    <location>
        <begin position="1"/>
        <end position="97"/>
    </location>
</feature>
<dbReference type="EMBL" id="AJ401309">
    <property type="protein sequence ID" value="CAC10481.1"/>
    <property type="molecule type" value="Genomic_DNA"/>
</dbReference>
<dbReference type="SMR" id="Q9F4E6"/>
<dbReference type="GO" id="GO:0005737">
    <property type="term" value="C:cytoplasm"/>
    <property type="evidence" value="ECO:0007669"/>
    <property type="project" value="UniProtKB-SubCell"/>
</dbReference>
<dbReference type="GO" id="GO:0005524">
    <property type="term" value="F:ATP binding"/>
    <property type="evidence" value="ECO:0007669"/>
    <property type="project" value="InterPro"/>
</dbReference>
<dbReference type="GO" id="GO:0046872">
    <property type="term" value="F:metal ion binding"/>
    <property type="evidence" value="ECO:0007669"/>
    <property type="project" value="TreeGrafter"/>
</dbReference>
<dbReference type="GO" id="GO:0044183">
    <property type="term" value="F:protein folding chaperone"/>
    <property type="evidence" value="ECO:0007669"/>
    <property type="project" value="InterPro"/>
</dbReference>
<dbReference type="GO" id="GO:0051087">
    <property type="term" value="F:protein-folding chaperone binding"/>
    <property type="evidence" value="ECO:0007669"/>
    <property type="project" value="TreeGrafter"/>
</dbReference>
<dbReference type="GO" id="GO:0051082">
    <property type="term" value="F:unfolded protein binding"/>
    <property type="evidence" value="ECO:0007669"/>
    <property type="project" value="TreeGrafter"/>
</dbReference>
<dbReference type="GO" id="GO:0051085">
    <property type="term" value="P:chaperone cofactor-dependent protein refolding"/>
    <property type="evidence" value="ECO:0007669"/>
    <property type="project" value="TreeGrafter"/>
</dbReference>
<dbReference type="CDD" id="cd00320">
    <property type="entry name" value="cpn10"/>
    <property type="match status" value="1"/>
</dbReference>
<dbReference type="FunFam" id="2.30.33.40:FF:000001">
    <property type="entry name" value="10 kDa chaperonin"/>
    <property type="match status" value="1"/>
</dbReference>
<dbReference type="Gene3D" id="2.30.33.40">
    <property type="entry name" value="GroES chaperonin"/>
    <property type="match status" value="1"/>
</dbReference>
<dbReference type="HAMAP" id="MF_00580">
    <property type="entry name" value="CH10"/>
    <property type="match status" value="1"/>
</dbReference>
<dbReference type="InterPro" id="IPR020818">
    <property type="entry name" value="Chaperonin_GroES"/>
</dbReference>
<dbReference type="InterPro" id="IPR037124">
    <property type="entry name" value="Chaperonin_GroES_sf"/>
</dbReference>
<dbReference type="InterPro" id="IPR018369">
    <property type="entry name" value="Chaprnonin_Cpn10_CS"/>
</dbReference>
<dbReference type="InterPro" id="IPR011032">
    <property type="entry name" value="GroES-like_sf"/>
</dbReference>
<dbReference type="NCBIfam" id="NF001526">
    <property type="entry name" value="PRK00364.1-1"/>
    <property type="match status" value="1"/>
</dbReference>
<dbReference type="NCBIfam" id="NF001527">
    <property type="entry name" value="PRK00364.1-2"/>
    <property type="match status" value="1"/>
</dbReference>
<dbReference type="NCBIfam" id="NF001531">
    <property type="entry name" value="PRK00364.2-2"/>
    <property type="match status" value="1"/>
</dbReference>
<dbReference type="PANTHER" id="PTHR10772">
    <property type="entry name" value="10 KDA HEAT SHOCK PROTEIN"/>
    <property type="match status" value="1"/>
</dbReference>
<dbReference type="PANTHER" id="PTHR10772:SF58">
    <property type="entry name" value="CO-CHAPERONIN GROES"/>
    <property type="match status" value="1"/>
</dbReference>
<dbReference type="Pfam" id="PF00166">
    <property type="entry name" value="Cpn10"/>
    <property type="match status" value="1"/>
</dbReference>
<dbReference type="PRINTS" id="PR00297">
    <property type="entry name" value="CHAPERONIN10"/>
</dbReference>
<dbReference type="SMART" id="SM00883">
    <property type="entry name" value="Cpn10"/>
    <property type="match status" value="1"/>
</dbReference>
<dbReference type="SUPFAM" id="SSF50129">
    <property type="entry name" value="GroES-like"/>
    <property type="match status" value="1"/>
</dbReference>
<dbReference type="PROSITE" id="PS00681">
    <property type="entry name" value="CHAPERONINS_CPN10"/>
    <property type="match status" value="1"/>
</dbReference>
<protein>
    <recommendedName>
        <fullName evidence="1">Co-chaperonin GroES</fullName>
    </recommendedName>
    <alternativeName>
        <fullName evidence="1">10 kDa chaperonin</fullName>
    </alternativeName>
    <alternativeName>
        <fullName evidence="1">Chaperonin-10</fullName>
        <shortName evidence="1">Cpn10</shortName>
    </alternativeName>
</protein>
<reference key="1">
    <citation type="journal article" date="2000" name="Proc. Natl. Acad. Sci. U.S.A.">
        <title>Post-symbiotic plasmid acquisition and evolution of the repA1-replicon in Buchnera aphidicola.</title>
        <authorList>
            <person name="Van Ham R.C.H.J."/>
            <person name="Gonzalez-Candelas F."/>
            <person name="Silva F.J."/>
            <person name="Sabater B."/>
            <person name="Moya A."/>
            <person name="Latorre A."/>
        </authorList>
    </citation>
    <scope>NUCLEOTIDE SEQUENCE [GENOMIC DNA]</scope>
</reference>
<comment type="function">
    <text evidence="1">Together with the chaperonin GroEL, plays an essential role in assisting protein folding. The GroEL-GroES system forms a nano-cage that allows encapsulation of the non-native substrate proteins and provides a physical environment optimized to promote and accelerate protein folding. GroES binds to the apical surface of the GroEL ring, thereby capping the opening of the GroEL channel.</text>
</comment>
<comment type="subunit">
    <text evidence="1">Heptamer of 7 subunits arranged in a ring. Interacts with the chaperonin GroEL.</text>
</comment>
<comment type="subcellular location">
    <subcellularLocation>
        <location evidence="1">Cytoplasm</location>
    </subcellularLocation>
</comment>
<comment type="similarity">
    <text evidence="1">Belongs to the GroES chaperonin family.</text>
</comment>
<name>CH10_BUCTT</name>
<keyword id="KW-0143">Chaperone</keyword>
<keyword id="KW-0963">Cytoplasm</keyword>
<gene>
    <name evidence="1" type="primary">groES</name>
    <name evidence="1" type="synonym">groS</name>
</gene>
<proteinExistence type="inferred from homology"/>
<evidence type="ECO:0000255" key="1">
    <source>
        <dbReference type="HAMAP-Rule" id="MF_00580"/>
    </source>
</evidence>